<gene>
    <name type="primary">dscc1</name>
    <name type="synonym">dcc1</name>
    <name type="ORF">TNeu038i11.1</name>
</gene>
<accession>Q6GL75</accession>
<reference key="1">
    <citation type="submission" date="2006-10" db="EMBL/GenBank/DDBJ databases">
        <authorList>
            <consortium name="Sanger Xenopus tropicalis EST/cDNA project"/>
        </authorList>
    </citation>
    <scope>NUCLEOTIDE SEQUENCE [LARGE SCALE MRNA]</scope>
    <source>
        <tissue>Neurula</tissue>
    </source>
</reference>
<reference key="2">
    <citation type="submission" date="2004-06" db="EMBL/GenBank/DDBJ databases">
        <authorList>
            <consortium name="NIH - Xenopus Gene Collection (XGC) project"/>
        </authorList>
    </citation>
    <scope>NUCLEOTIDE SEQUENCE [LARGE SCALE MRNA]</scope>
    <source>
        <tissue>Embryo</tissue>
    </source>
</reference>
<sequence length="391" mass="44632">MSRSAEEVEATLQIAKVDLEDLRNTVHCLTFSSDFTSGDYSLMELDDTLCKQIEAGDSLVIRGDKSDHAVLCSQDKTYDLKIADTSNLLLFIPGCKTPDQLPADQQPLTIINCEIAGFSNHYWELRRCRPKLKKLKKLLMENTYNGPENERESQDNSLHTTEDLLNMIQASNEELVDHLKAIHACSINGFWRLLDFDYEMKLLNHITQLIDSESWSFSKVPLPVCLQELRSLEPEEMIEHCLTCYGKRLIDEGTGGDFFALDEDKICRATALMLLQNAVKFNLAEFQEVWQQSVPEGMNTRLDQLKGLALVDRTSRPETIFLLKTEDLPEDTQERFNTLFGMREKWAEADIAPYIKDLCGEKQTIGALLTKYARSSMQNGIKLYNSRRPLS</sequence>
<evidence type="ECO:0000250" key="1"/>
<evidence type="ECO:0000305" key="2"/>
<proteinExistence type="evidence at transcript level"/>
<keyword id="KW-0131">Cell cycle</keyword>
<keyword id="KW-0235">DNA replication</keyword>
<keyword id="KW-0238">DNA-binding</keyword>
<keyword id="KW-0539">Nucleus</keyword>
<keyword id="KW-1185">Reference proteome</keyword>
<comment type="function">
    <text evidence="1">Loads pcna onto primed templates regulating velocity, spacing and restart activity of replication forks. May couple DNA replication to sister chromatid cohesion (By similarity).</text>
</comment>
<comment type="subunit">
    <text evidence="1">Component of the ctf18-RFC complex which consists of ctf18, ctf8, dscc1 and the RFC complex.</text>
</comment>
<comment type="subcellular location">
    <subcellularLocation>
        <location evidence="1">Nucleus</location>
    </subcellularLocation>
</comment>
<comment type="similarity">
    <text evidence="2">Belongs to the DCC1 family.</text>
</comment>
<feature type="chain" id="PRO_0000318068" description="Sister chromatid cohesion protein DCC1">
    <location>
        <begin position="1"/>
        <end position="391"/>
    </location>
</feature>
<protein>
    <recommendedName>
        <fullName>Sister chromatid cohesion protein DCC1</fullName>
    </recommendedName>
</protein>
<name>DCC1_XENTR</name>
<dbReference type="EMBL" id="CR760288">
    <property type="protein sequence ID" value="CAJ83021.1"/>
    <property type="molecule type" value="mRNA"/>
</dbReference>
<dbReference type="EMBL" id="BC074630">
    <property type="protein sequence ID" value="AAH74630.1"/>
    <property type="molecule type" value="mRNA"/>
</dbReference>
<dbReference type="RefSeq" id="NP_001004834.1">
    <property type="nucleotide sequence ID" value="NM_001004834.1"/>
</dbReference>
<dbReference type="SMR" id="Q6GL75"/>
<dbReference type="FunCoup" id="Q6GL75">
    <property type="interactions" value="1829"/>
</dbReference>
<dbReference type="STRING" id="8364.ENSXETP00000026599"/>
<dbReference type="PaxDb" id="8364-ENSXETP00000006777"/>
<dbReference type="DNASU" id="448100"/>
<dbReference type="GeneID" id="448100"/>
<dbReference type="KEGG" id="xtr:448100"/>
<dbReference type="AGR" id="Xenbase:XB-GENE-5781750"/>
<dbReference type="CTD" id="79075"/>
<dbReference type="Xenbase" id="XB-GENE-5781750">
    <property type="gene designation" value="dscc1"/>
</dbReference>
<dbReference type="eggNOG" id="KOG0798">
    <property type="taxonomic scope" value="Eukaryota"/>
</dbReference>
<dbReference type="HOGENOM" id="CLU_034504_1_1_1"/>
<dbReference type="InParanoid" id="Q6GL75"/>
<dbReference type="OMA" id="DSESWPF"/>
<dbReference type="OrthoDB" id="5199543at2759"/>
<dbReference type="Reactome" id="R-XTR-174411">
    <property type="pathway name" value="Polymerase switching on the C-strand of the telomere"/>
</dbReference>
<dbReference type="Proteomes" id="UP000008143">
    <property type="component" value="Chromosome 6"/>
</dbReference>
<dbReference type="Bgee" id="ENSXETG00000003126">
    <property type="expression patterns" value="Expressed in ovary and 15 other cell types or tissues"/>
</dbReference>
<dbReference type="ExpressionAtlas" id="Q6GL75">
    <property type="expression patterns" value="differential"/>
</dbReference>
<dbReference type="GO" id="GO:0000785">
    <property type="term" value="C:chromatin"/>
    <property type="evidence" value="ECO:0000250"/>
    <property type="project" value="UniProtKB"/>
</dbReference>
<dbReference type="GO" id="GO:0031390">
    <property type="term" value="C:Ctf18 RFC-like complex"/>
    <property type="evidence" value="ECO:0007669"/>
    <property type="project" value="InterPro"/>
</dbReference>
<dbReference type="GO" id="GO:0003677">
    <property type="term" value="F:DNA binding"/>
    <property type="evidence" value="ECO:0007669"/>
    <property type="project" value="UniProtKB-KW"/>
</dbReference>
<dbReference type="GO" id="GO:0006260">
    <property type="term" value="P:DNA replication"/>
    <property type="evidence" value="ECO:0007669"/>
    <property type="project" value="UniProtKB-KW"/>
</dbReference>
<dbReference type="GO" id="GO:0034088">
    <property type="term" value="P:maintenance of mitotic sister chromatid cohesion"/>
    <property type="evidence" value="ECO:0000250"/>
    <property type="project" value="UniProtKB"/>
</dbReference>
<dbReference type="GO" id="GO:0006275">
    <property type="term" value="P:regulation of DNA replication"/>
    <property type="evidence" value="ECO:0000250"/>
    <property type="project" value="UniProtKB"/>
</dbReference>
<dbReference type="InterPro" id="IPR019128">
    <property type="entry name" value="Dcc1"/>
</dbReference>
<dbReference type="PANTHER" id="PTHR13395:SF6">
    <property type="entry name" value="SISTER CHROMATID COHESION PROTEIN DCC1"/>
    <property type="match status" value="1"/>
</dbReference>
<dbReference type="PANTHER" id="PTHR13395">
    <property type="entry name" value="SISTER CHROMATID COHESION PROTEIN DCC1-RELATED"/>
    <property type="match status" value="1"/>
</dbReference>
<dbReference type="Pfam" id="PF09724">
    <property type="entry name" value="Dcc1"/>
    <property type="match status" value="1"/>
</dbReference>
<organism>
    <name type="scientific">Xenopus tropicalis</name>
    <name type="common">Western clawed frog</name>
    <name type="synonym">Silurana tropicalis</name>
    <dbReference type="NCBI Taxonomy" id="8364"/>
    <lineage>
        <taxon>Eukaryota</taxon>
        <taxon>Metazoa</taxon>
        <taxon>Chordata</taxon>
        <taxon>Craniata</taxon>
        <taxon>Vertebrata</taxon>
        <taxon>Euteleostomi</taxon>
        <taxon>Amphibia</taxon>
        <taxon>Batrachia</taxon>
        <taxon>Anura</taxon>
        <taxon>Pipoidea</taxon>
        <taxon>Pipidae</taxon>
        <taxon>Xenopodinae</taxon>
        <taxon>Xenopus</taxon>
        <taxon>Silurana</taxon>
    </lineage>
</organism>